<evidence type="ECO:0000255" key="1">
    <source>
        <dbReference type="HAMAP-Rule" id="MF_01367"/>
    </source>
</evidence>
<evidence type="ECO:0000305" key="2"/>
<keyword id="KW-0687">Ribonucleoprotein</keyword>
<keyword id="KW-0689">Ribosomal protein</keyword>
<keyword id="KW-0694">RNA-binding</keyword>
<keyword id="KW-0699">rRNA-binding</keyword>
<feature type="chain" id="PRO_1000055529" description="Large ribosomal subunit protein uL14">
    <location>
        <begin position="1"/>
        <end position="122"/>
    </location>
</feature>
<sequence>MIQMQTNLDVADNSGARRVMCIKVLGGSKRRYASVGDIIVVSIKEAIPRGRVKKGDVMKAVVVRTAKDIRRPDGSVIRFDNNAAVLIDNKKEPIGTRIFGPVPRELRAKNHMKIISLAPEVL</sequence>
<accession>A5VQZ6</accession>
<comment type="function">
    <text evidence="1">Binds to 23S rRNA. Forms part of two intersubunit bridges in the 70S ribosome.</text>
</comment>
<comment type="subunit">
    <text evidence="1">Part of the 50S ribosomal subunit. Forms a cluster with proteins L3 and L19. In the 70S ribosome, L14 and L19 interact and together make contacts with the 16S rRNA in bridges B5 and B8.</text>
</comment>
<comment type="similarity">
    <text evidence="1">Belongs to the universal ribosomal protein uL14 family.</text>
</comment>
<reference key="1">
    <citation type="journal article" date="2009" name="PLoS ONE">
        <title>Genome degradation in Brucella ovis corresponds with narrowing of its host range and tissue tropism.</title>
        <authorList>
            <person name="Tsolis R.M."/>
            <person name="Seshadri R."/>
            <person name="Santos R.L."/>
            <person name="Sangari F.J."/>
            <person name="Lobo J.M."/>
            <person name="de Jong M.F."/>
            <person name="Ren Q."/>
            <person name="Myers G."/>
            <person name="Brinkac L.M."/>
            <person name="Nelson W.C."/>
            <person name="Deboy R.T."/>
            <person name="Angiuoli S."/>
            <person name="Khouri H."/>
            <person name="Dimitrov G."/>
            <person name="Robinson J.R."/>
            <person name="Mulligan S."/>
            <person name="Walker R.L."/>
            <person name="Elzer P.E."/>
            <person name="Hassan K.A."/>
            <person name="Paulsen I.T."/>
        </authorList>
    </citation>
    <scope>NUCLEOTIDE SEQUENCE [LARGE SCALE GENOMIC DNA]</scope>
    <source>
        <strain>ATCC 25840 / 63/290 / NCTC 10512</strain>
    </source>
</reference>
<organism>
    <name type="scientific">Brucella ovis (strain ATCC 25840 / 63/290 / NCTC 10512)</name>
    <dbReference type="NCBI Taxonomy" id="444178"/>
    <lineage>
        <taxon>Bacteria</taxon>
        <taxon>Pseudomonadati</taxon>
        <taxon>Pseudomonadota</taxon>
        <taxon>Alphaproteobacteria</taxon>
        <taxon>Hyphomicrobiales</taxon>
        <taxon>Brucellaceae</taxon>
        <taxon>Brucella/Ochrobactrum group</taxon>
        <taxon>Brucella</taxon>
    </lineage>
</organism>
<gene>
    <name evidence="1" type="primary">rplN</name>
    <name type="ordered locus">BOV_1186</name>
</gene>
<dbReference type="EMBL" id="CP000708">
    <property type="protein sequence ID" value="ABQ61574.1"/>
    <property type="molecule type" value="Genomic_DNA"/>
</dbReference>
<dbReference type="RefSeq" id="WP_004683923.1">
    <property type="nucleotide sequence ID" value="NC_009505.1"/>
</dbReference>
<dbReference type="SMR" id="A5VQZ6"/>
<dbReference type="GeneID" id="97533534"/>
<dbReference type="KEGG" id="bov:BOV_1186"/>
<dbReference type="HOGENOM" id="CLU_095071_2_1_5"/>
<dbReference type="PhylomeDB" id="A5VQZ6"/>
<dbReference type="Proteomes" id="UP000006383">
    <property type="component" value="Chromosome I"/>
</dbReference>
<dbReference type="GO" id="GO:0022625">
    <property type="term" value="C:cytosolic large ribosomal subunit"/>
    <property type="evidence" value="ECO:0007669"/>
    <property type="project" value="TreeGrafter"/>
</dbReference>
<dbReference type="GO" id="GO:0070180">
    <property type="term" value="F:large ribosomal subunit rRNA binding"/>
    <property type="evidence" value="ECO:0007669"/>
    <property type="project" value="TreeGrafter"/>
</dbReference>
<dbReference type="GO" id="GO:0003735">
    <property type="term" value="F:structural constituent of ribosome"/>
    <property type="evidence" value="ECO:0007669"/>
    <property type="project" value="InterPro"/>
</dbReference>
<dbReference type="GO" id="GO:0006412">
    <property type="term" value="P:translation"/>
    <property type="evidence" value="ECO:0007669"/>
    <property type="project" value="UniProtKB-UniRule"/>
</dbReference>
<dbReference type="CDD" id="cd00337">
    <property type="entry name" value="Ribosomal_uL14"/>
    <property type="match status" value="1"/>
</dbReference>
<dbReference type="FunFam" id="2.40.150.20:FF:000001">
    <property type="entry name" value="50S ribosomal protein L14"/>
    <property type="match status" value="1"/>
</dbReference>
<dbReference type="Gene3D" id="2.40.150.20">
    <property type="entry name" value="Ribosomal protein L14"/>
    <property type="match status" value="1"/>
</dbReference>
<dbReference type="HAMAP" id="MF_01367">
    <property type="entry name" value="Ribosomal_uL14"/>
    <property type="match status" value="1"/>
</dbReference>
<dbReference type="InterPro" id="IPR000218">
    <property type="entry name" value="Ribosomal_uL14"/>
</dbReference>
<dbReference type="InterPro" id="IPR005745">
    <property type="entry name" value="Ribosomal_uL14_bac-type"/>
</dbReference>
<dbReference type="InterPro" id="IPR019972">
    <property type="entry name" value="Ribosomal_uL14_CS"/>
</dbReference>
<dbReference type="InterPro" id="IPR036853">
    <property type="entry name" value="Ribosomal_uL14_sf"/>
</dbReference>
<dbReference type="NCBIfam" id="TIGR01067">
    <property type="entry name" value="rplN_bact"/>
    <property type="match status" value="1"/>
</dbReference>
<dbReference type="PANTHER" id="PTHR11761">
    <property type="entry name" value="50S/60S RIBOSOMAL PROTEIN L14/L23"/>
    <property type="match status" value="1"/>
</dbReference>
<dbReference type="PANTHER" id="PTHR11761:SF3">
    <property type="entry name" value="LARGE RIBOSOMAL SUBUNIT PROTEIN UL14M"/>
    <property type="match status" value="1"/>
</dbReference>
<dbReference type="Pfam" id="PF00238">
    <property type="entry name" value="Ribosomal_L14"/>
    <property type="match status" value="1"/>
</dbReference>
<dbReference type="SMART" id="SM01374">
    <property type="entry name" value="Ribosomal_L14"/>
    <property type="match status" value="1"/>
</dbReference>
<dbReference type="SUPFAM" id="SSF50193">
    <property type="entry name" value="Ribosomal protein L14"/>
    <property type="match status" value="1"/>
</dbReference>
<dbReference type="PROSITE" id="PS00049">
    <property type="entry name" value="RIBOSOMAL_L14"/>
    <property type="match status" value="1"/>
</dbReference>
<proteinExistence type="inferred from homology"/>
<protein>
    <recommendedName>
        <fullName evidence="1">Large ribosomal subunit protein uL14</fullName>
    </recommendedName>
    <alternativeName>
        <fullName evidence="2">50S ribosomal protein L14</fullName>
    </alternativeName>
</protein>
<name>RL14_BRUO2</name>